<reference key="1">
    <citation type="journal article" date="2004" name="Nature">
        <title>Genome sequence of the Brown Norway rat yields insights into mammalian evolution.</title>
        <authorList>
            <person name="Gibbs R.A."/>
            <person name="Weinstock G.M."/>
            <person name="Metzker M.L."/>
            <person name="Muzny D.M."/>
            <person name="Sodergren E.J."/>
            <person name="Scherer S."/>
            <person name="Scott G."/>
            <person name="Steffen D."/>
            <person name="Worley K.C."/>
            <person name="Burch P.E."/>
            <person name="Okwuonu G."/>
            <person name="Hines S."/>
            <person name="Lewis L."/>
            <person name="Deramo C."/>
            <person name="Delgado O."/>
            <person name="Dugan-Rocha S."/>
            <person name="Miner G."/>
            <person name="Morgan M."/>
            <person name="Hawes A."/>
            <person name="Gill R."/>
            <person name="Holt R.A."/>
            <person name="Adams M.D."/>
            <person name="Amanatides P.G."/>
            <person name="Baden-Tillson H."/>
            <person name="Barnstead M."/>
            <person name="Chin S."/>
            <person name="Evans C.A."/>
            <person name="Ferriera S."/>
            <person name="Fosler C."/>
            <person name="Glodek A."/>
            <person name="Gu Z."/>
            <person name="Jennings D."/>
            <person name="Kraft C.L."/>
            <person name="Nguyen T."/>
            <person name="Pfannkoch C.M."/>
            <person name="Sitter C."/>
            <person name="Sutton G.G."/>
            <person name="Venter J.C."/>
            <person name="Woodage T."/>
            <person name="Smith D."/>
            <person name="Lee H.-M."/>
            <person name="Gustafson E."/>
            <person name="Cahill P."/>
            <person name="Kana A."/>
            <person name="Doucette-Stamm L."/>
            <person name="Weinstock K."/>
            <person name="Fechtel K."/>
            <person name="Weiss R.B."/>
            <person name="Dunn D.M."/>
            <person name="Green E.D."/>
            <person name="Blakesley R.W."/>
            <person name="Bouffard G.G."/>
            <person name="De Jong P.J."/>
            <person name="Osoegawa K."/>
            <person name="Zhu B."/>
            <person name="Marra M."/>
            <person name="Schein J."/>
            <person name="Bosdet I."/>
            <person name="Fjell C."/>
            <person name="Jones S."/>
            <person name="Krzywinski M."/>
            <person name="Mathewson C."/>
            <person name="Siddiqui A."/>
            <person name="Wye N."/>
            <person name="McPherson J."/>
            <person name="Zhao S."/>
            <person name="Fraser C.M."/>
            <person name="Shetty J."/>
            <person name="Shatsman S."/>
            <person name="Geer K."/>
            <person name="Chen Y."/>
            <person name="Abramzon S."/>
            <person name="Nierman W.C."/>
            <person name="Havlak P.H."/>
            <person name="Chen R."/>
            <person name="Durbin K.J."/>
            <person name="Egan A."/>
            <person name="Ren Y."/>
            <person name="Song X.-Z."/>
            <person name="Li B."/>
            <person name="Liu Y."/>
            <person name="Qin X."/>
            <person name="Cawley S."/>
            <person name="Cooney A.J."/>
            <person name="D'Souza L.M."/>
            <person name="Martin K."/>
            <person name="Wu J.Q."/>
            <person name="Gonzalez-Garay M.L."/>
            <person name="Jackson A.R."/>
            <person name="Kalafus K.J."/>
            <person name="McLeod M.P."/>
            <person name="Milosavljevic A."/>
            <person name="Virk D."/>
            <person name="Volkov A."/>
            <person name="Wheeler D.A."/>
            <person name="Zhang Z."/>
            <person name="Bailey J.A."/>
            <person name="Eichler E.E."/>
            <person name="Tuzun E."/>
            <person name="Birney E."/>
            <person name="Mongin E."/>
            <person name="Ureta-Vidal A."/>
            <person name="Woodwark C."/>
            <person name="Zdobnov E."/>
            <person name="Bork P."/>
            <person name="Suyama M."/>
            <person name="Torrents D."/>
            <person name="Alexandersson M."/>
            <person name="Trask B.J."/>
            <person name="Young J.M."/>
            <person name="Huang H."/>
            <person name="Wang H."/>
            <person name="Xing H."/>
            <person name="Daniels S."/>
            <person name="Gietzen D."/>
            <person name="Schmidt J."/>
            <person name="Stevens K."/>
            <person name="Vitt U."/>
            <person name="Wingrove J."/>
            <person name="Camara F."/>
            <person name="Mar Alba M."/>
            <person name="Abril J.F."/>
            <person name="Guigo R."/>
            <person name="Smit A."/>
            <person name="Dubchak I."/>
            <person name="Rubin E.M."/>
            <person name="Couronne O."/>
            <person name="Poliakov A."/>
            <person name="Huebner N."/>
            <person name="Ganten D."/>
            <person name="Goesele C."/>
            <person name="Hummel O."/>
            <person name="Kreitler T."/>
            <person name="Lee Y.-A."/>
            <person name="Monti J."/>
            <person name="Schulz H."/>
            <person name="Zimdahl H."/>
            <person name="Himmelbauer H."/>
            <person name="Lehrach H."/>
            <person name="Jacob H.J."/>
            <person name="Bromberg S."/>
            <person name="Gullings-Handley J."/>
            <person name="Jensen-Seaman M.I."/>
            <person name="Kwitek A.E."/>
            <person name="Lazar J."/>
            <person name="Pasko D."/>
            <person name="Tonellato P.J."/>
            <person name="Twigger S."/>
            <person name="Ponting C.P."/>
            <person name="Duarte J.M."/>
            <person name="Rice S."/>
            <person name="Goodstadt L."/>
            <person name="Beatson S.A."/>
            <person name="Emes R.D."/>
            <person name="Winter E.E."/>
            <person name="Webber C."/>
            <person name="Brandt P."/>
            <person name="Nyakatura G."/>
            <person name="Adetobi M."/>
            <person name="Chiaromonte F."/>
            <person name="Elnitski L."/>
            <person name="Eswara P."/>
            <person name="Hardison R.C."/>
            <person name="Hou M."/>
            <person name="Kolbe D."/>
            <person name="Makova K."/>
            <person name="Miller W."/>
            <person name="Nekrutenko A."/>
            <person name="Riemer C."/>
            <person name="Schwartz S."/>
            <person name="Taylor J."/>
            <person name="Yang S."/>
            <person name="Zhang Y."/>
            <person name="Lindpaintner K."/>
            <person name="Andrews T.D."/>
            <person name="Caccamo M."/>
            <person name="Clamp M."/>
            <person name="Clarke L."/>
            <person name="Curwen V."/>
            <person name="Durbin R.M."/>
            <person name="Eyras E."/>
            <person name="Searle S.M."/>
            <person name="Cooper G.M."/>
            <person name="Batzoglou S."/>
            <person name="Brudno M."/>
            <person name="Sidow A."/>
            <person name="Stone E.A."/>
            <person name="Payseur B.A."/>
            <person name="Bourque G."/>
            <person name="Lopez-Otin C."/>
            <person name="Puente X.S."/>
            <person name="Chakrabarti K."/>
            <person name="Chatterji S."/>
            <person name="Dewey C."/>
            <person name="Pachter L."/>
            <person name="Bray N."/>
            <person name="Yap V.B."/>
            <person name="Caspi A."/>
            <person name="Tesler G."/>
            <person name="Pevzner P.A."/>
            <person name="Haussler D."/>
            <person name="Roskin K.M."/>
            <person name="Baertsch R."/>
            <person name="Clawson H."/>
            <person name="Furey T.S."/>
            <person name="Hinrichs A.S."/>
            <person name="Karolchik D."/>
            <person name="Kent W.J."/>
            <person name="Rosenbloom K.R."/>
            <person name="Trumbower H."/>
            <person name="Weirauch M."/>
            <person name="Cooper D.N."/>
            <person name="Stenson P.D."/>
            <person name="Ma B."/>
            <person name="Brent M."/>
            <person name="Arumugam M."/>
            <person name="Shteynberg D."/>
            <person name="Copley R.R."/>
            <person name="Taylor M.S."/>
            <person name="Riethman H."/>
            <person name="Mudunuri U."/>
            <person name="Peterson J."/>
            <person name="Guyer M."/>
            <person name="Felsenfeld A."/>
            <person name="Old S."/>
            <person name="Mockrin S."/>
            <person name="Collins F.S."/>
        </authorList>
    </citation>
    <scope>NUCLEOTIDE SEQUENCE [LARGE SCALE GENOMIC DNA]</scope>
    <source>
        <strain>Brown Norway</strain>
    </source>
</reference>
<reference key="2">
    <citation type="journal article" date="2004" name="Genome Res.">
        <title>The status, quality, and expansion of the NIH full-length cDNA project: the Mammalian Gene Collection (MGC).</title>
        <authorList>
            <consortium name="The MGC Project Team"/>
        </authorList>
    </citation>
    <scope>NUCLEOTIDE SEQUENCE [LARGE SCALE MRNA]</scope>
</reference>
<reference key="3">
    <citation type="journal article" date="2013" name="Genes Dev.">
        <title>The DEAH-box helicase DHX36 mediates dendritic localization of the neuronal precursor-microRNA-134.</title>
        <authorList>
            <person name="Bicker S."/>
            <person name="Khudayberdiev S."/>
            <person name="Weiss K."/>
            <person name="Zocher K."/>
            <person name="Baumeister S."/>
            <person name="Schratt G."/>
        </authorList>
    </citation>
    <scope>FUNCTION</scope>
    <scope>PRE-MIR-134 RNA-BINDING</scope>
    <scope>SUBCELLULAR LOCATION</scope>
    <scope>IDENTIFICATION BY MASS SPECTROMETRY</scope>
    <scope>DOMAIN</scope>
</reference>
<dbReference type="EC" id="3.6.4.12" evidence="3"/>
<dbReference type="EC" id="3.6.4.13" evidence="3"/>
<dbReference type="EMBL" id="AABR07010822">
    <property type="status" value="NOT_ANNOTATED_CDS"/>
    <property type="molecule type" value="Genomic_DNA"/>
</dbReference>
<dbReference type="EMBL" id="AABR07010823">
    <property type="status" value="NOT_ANNOTATED_CDS"/>
    <property type="molecule type" value="Genomic_DNA"/>
</dbReference>
<dbReference type="EMBL" id="CH474003">
    <property type="protein sequence ID" value="EDM14820.1"/>
    <property type="molecule type" value="Genomic_DNA"/>
</dbReference>
<dbReference type="RefSeq" id="NP_001101148.1">
    <property type="nucleotide sequence ID" value="NM_001107678.3"/>
</dbReference>
<dbReference type="SMR" id="D4A2Z8"/>
<dbReference type="FunCoup" id="D4A2Z8">
    <property type="interactions" value="4175"/>
</dbReference>
<dbReference type="STRING" id="10116.ENSRNOP00000019824"/>
<dbReference type="iPTMnet" id="D4A2Z8"/>
<dbReference type="PhosphoSitePlus" id="D4A2Z8"/>
<dbReference type="jPOST" id="D4A2Z8"/>
<dbReference type="PaxDb" id="10116-ENSRNOP00000019824"/>
<dbReference type="PeptideAtlas" id="D4A2Z8"/>
<dbReference type="Ensembl" id="ENSRNOT00000019824.7">
    <property type="protein sequence ID" value="ENSRNOP00000019824.5"/>
    <property type="gene ID" value="ENSRNOG00000014599.7"/>
</dbReference>
<dbReference type="GeneID" id="310461"/>
<dbReference type="KEGG" id="rno:310461"/>
<dbReference type="UCSC" id="RGD:1308767">
    <property type="organism name" value="rat"/>
</dbReference>
<dbReference type="AGR" id="RGD:1308767"/>
<dbReference type="CTD" id="170506"/>
<dbReference type="RGD" id="1308767">
    <property type="gene designation" value="Dhx36"/>
</dbReference>
<dbReference type="eggNOG" id="KOG0920">
    <property type="taxonomic scope" value="Eukaryota"/>
</dbReference>
<dbReference type="GeneTree" id="ENSGT00940000156903"/>
<dbReference type="HOGENOM" id="CLU_001832_1_4_1"/>
<dbReference type="InParanoid" id="D4A2Z8"/>
<dbReference type="OMA" id="WLQSDKH"/>
<dbReference type="OrthoDB" id="5600252at2759"/>
<dbReference type="PhylomeDB" id="D4A2Z8"/>
<dbReference type="TreeFam" id="TF324744"/>
<dbReference type="Reactome" id="R-RNO-3134963">
    <property type="pathway name" value="DEx/H-box helicases activate type I IFN and inflammatory cytokines production"/>
</dbReference>
<dbReference type="PRO" id="PR:D4A2Z8"/>
<dbReference type="Proteomes" id="UP000002494">
    <property type="component" value="Chromosome 2"/>
</dbReference>
<dbReference type="Proteomes" id="UP000234681">
    <property type="component" value="Chromosome 2"/>
</dbReference>
<dbReference type="Bgee" id="ENSRNOG00000014599">
    <property type="expression patterns" value="Expressed in thymus and 20 other cell types or tissues"/>
</dbReference>
<dbReference type="GO" id="GO:0030424">
    <property type="term" value="C:axon"/>
    <property type="evidence" value="ECO:0000314"/>
    <property type="project" value="UniProtKB"/>
</dbReference>
<dbReference type="GO" id="GO:0000781">
    <property type="term" value="C:chromosome, telomeric region"/>
    <property type="evidence" value="ECO:0000250"/>
    <property type="project" value="UniProtKB"/>
</dbReference>
<dbReference type="GO" id="GO:0005737">
    <property type="term" value="C:cytoplasm"/>
    <property type="evidence" value="ECO:0000250"/>
    <property type="project" value="UniProtKB"/>
</dbReference>
<dbReference type="GO" id="GO:0010494">
    <property type="term" value="C:cytoplasmic stress granule"/>
    <property type="evidence" value="ECO:0000266"/>
    <property type="project" value="RGD"/>
</dbReference>
<dbReference type="GO" id="GO:0005829">
    <property type="term" value="C:cytosol"/>
    <property type="evidence" value="ECO:0000250"/>
    <property type="project" value="UniProtKB"/>
</dbReference>
<dbReference type="GO" id="GO:0030425">
    <property type="term" value="C:dendrite"/>
    <property type="evidence" value="ECO:0000314"/>
    <property type="project" value="UniProtKB"/>
</dbReference>
<dbReference type="GO" id="GO:0005739">
    <property type="term" value="C:mitochondrion"/>
    <property type="evidence" value="ECO:0007669"/>
    <property type="project" value="UniProtKB-SubCell"/>
</dbReference>
<dbReference type="GO" id="GO:0016607">
    <property type="term" value="C:nuclear speck"/>
    <property type="evidence" value="ECO:0000250"/>
    <property type="project" value="UniProtKB"/>
</dbReference>
<dbReference type="GO" id="GO:0005634">
    <property type="term" value="C:nucleus"/>
    <property type="evidence" value="ECO:0000250"/>
    <property type="project" value="UniProtKB"/>
</dbReference>
<dbReference type="GO" id="GO:0043204">
    <property type="term" value="C:perikaryon"/>
    <property type="evidence" value="ECO:0000314"/>
    <property type="project" value="UniProtKB"/>
</dbReference>
<dbReference type="GO" id="GO:0005524">
    <property type="term" value="F:ATP binding"/>
    <property type="evidence" value="ECO:0000250"/>
    <property type="project" value="UniProtKB"/>
</dbReference>
<dbReference type="GO" id="GO:0016887">
    <property type="term" value="F:ATP hydrolysis activity"/>
    <property type="evidence" value="ECO:0007669"/>
    <property type="project" value="RHEA"/>
</dbReference>
<dbReference type="GO" id="GO:0008094">
    <property type="term" value="F:ATP-dependent activity, acting on DNA"/>
    <property type="evidence" value="ECO:0000266"/>
    <property type="project" value="RGD"/>
</dbReference>
<dbReference type="GO" id="GO:0140640">
    <property type="term" value="F:catalytic activity, acting on a nucleic acid"/>
    <property type="evidence" value="ECO:0000250"/>
    <property type="project" value="UniProtKB"/>
</dbReference>
<dbReference type="GO" id="GO:0003678">
    <property type="term" value="F:DNA helicase activity"/>
    <property type="evidence" value="ECO:0000250"/>
    <property type="project" value="UniProtKB"/>
</dbReference>
<dbReference type="GO" id="GO:0003725">
    <property type="term" value="F:double-stranded RNA binding"/>
    <property type="evidence" value="ECO:0000266"/>
    <property type="project" value="RGD"/>
</dbReference>
<dbReference type="GO" id="GO:0051880">
    <property type="term" value="F:G-quadruplex DNA binding"/>
    <property type="evidence" value="ECO:0000250"/>
    <property type="project" value="UniProtKB"/>
</dbReference>
<dbReference type="GO" id="GO:0002151">
    <property type="term" value="F:G-quadruplex RNA binding"/>
    <property type="evidence" value="ECO:0000250"/>
    <property type="project" value="UniProtKB"/>
</dbReference>
<dbReference type="GO" id="GO:0042826">
    <property type="term" value="F:histone deacetylase binding"/>
    <property type="evidence" value="ECO:0000266"/>
    <property type="project" value="RGD"/>
</dbReference>
<dbReference type="GO" id="GO:0000287">
    <property type="term" value="F:magnesium ion binding"/>
    <property type="evidence" value="ECO:0000250"/>
    <property type="project" value="UniProtKB"/>
</dbReference>
<dbReference type="GO" id="GO:0035925">
    <property type="term" value="F:mRNA 3'-UTR AU-rich region binding"/>
    <property type="evidence" value="ECO:0000250"/>
    <property type="project" value="UniProtKB"/>
</dbReference>
<dbReference type="GO" id="GO:0003730">
    <property type="term" value="F:mRNA 3'-UTR binding"/>
    <property type="evidence" value="ECO:0000250"/>
    <property type="project" value="UniProtKB"/>
</dbReference>
<dbReference type="GO" id="GO:0048027">
    <property type="term" value="F:mRNA 5'-UTR binding"/>
    <property type="evidence" value="ECO:0000250"/>
    <property type="project" value="UniProtKB"/>
</dbReference>
<dbReference type="GO" id="GO:0070883">
    <property type="term" value="F:pre-miRNA binding"/>
    <property type="evidence" value="ECO:0000314"/>
    <property type="project" value="UniProtKB"/>
</dbReference>
<dbReference type="GO" id="GO:0003723">
    <property type="term" value="F:RNA binding"/>
    <property type="evidence" value="ECO:0000266"/>
    <property type="project" value="RGD"/>
</dbReference>
<dbReference type="GO" id="GO:0003724">
    <property type="term" value="F:RNA helicase activity"/>
    <property type="evidence" value="ECO:0000250"/>
    <property type="project" value="UniProtKB"/>
</dbReference>
<dbReference type="GO" id="GO:0000978">
    <property type="term" value="F:RNA polymerase II cis-regulatory region sequence-specific DNA binding"/>
    <property type="evidence" value="ECO:0000250"/>
    <property type="project" value="UniProtKB"/>
</dbReference>
<dbReference type="GO" id="GO:0003697">
    <property type="term" value="F:single-stranded DNA binding"/>
    <property type="evidence" value="ECO:0000266"/>
    <property type="project" value="RGD"/>
</dbReference>
<dbReference type="GO" id="GO:0070034">
    <property type="term" value="F:telomerase RNA binding"/>
    <property type="evidence" value="ECO:0000250"/>
    <property type="project" value="UniProtKB"/>
</dbReference>
<dbReference type="GO" id="GO:0000976">
    <property type="term" value="F:transcription cis-regulatory region binding"/>
    <property type="evidence" value="ECO:0000266"/>
    <property type="project" value="RGD"/>
</dbReference>
<dbReference type="GO" id="GO:0061158">
    <property type="term" value="P:3'-UTR-mediated mRNA destabilization"/>
    <property type="evidence" value="ECO:0000250"/>
    <property type="project" value="UniProtKB"/>
</dbReference>
<dbReference type="GO" id="GO:0030154">
    <property type="term" value="P:cell differentiation"/>
    <property type="evidence" value="ECO:0007669"/>
    <property type="project" value="UniProtKB-KW"/>
</dbReference>
<dbReference type="GO" id="GO:1903843">
    <property type="term" value="P:cellular response to arsenite ion"/>
    <property type="evidence" value="ECO:0000266"/>
    <property type="project" value="RGD"/>
</dbReference>
<dbReference type="GO" id="GO:0034605">
    <property type="term" value="P:cellular response to heat"/>
    <property type="evidence" value="ECO:0000266"/>
    <property type="project" value="RGD"/>
</dbReference>
<dbReference type="GO" id="GO:0034644">
    <property type="term" value="P:cellular response to UV"/>
    <property type="evidence" value="ECO:0000250"/>
    <property type="project" value="UniProtKB"/>
</dbReference>
<dbReference type="GO" id="GO:0051607">
    <property type="term" value="P:defense response to virus"/>
    <property type="evidence" value="ECO:0007669"/>
    <property type="project" value="UniProtKB-KW"/>
</dbReference>
<dbReference type="GO" id="GO:0045087">
    <property type="term" value="P:innate immune response"/>
    <property type="evidence" value="ECO:0007669"/>
    <property type="project" value="UniProtKB-KW"/>
</dbReference>
<dbReference type="GO" id="GO:0017148">
    <property type="term" value="P:negative regulation of translation"/>
    <property type="evidence" value="ECO:0000250"/>
    <property type="project" value="UniProtKB"/>
</dbReference>
<dbReference type="GO" id="GO:0001503">
    <property type="term" value="P:ossification"/>
    <property type="evidence" value="ECO:0000266"/>
    <property type="project" value="RGD"/>
</dbReference>
<dbReference type="GO" id="GO:0043123">
    <property type="term" value="P:positive regulation of canonical NF-kappaB signal transduction"/>
    <property type="evidence" value="ECO:0000250"/>
    <property type="project" value="UniProtKB"/>
</dbReference>
<dbReference type="GO" id="GO:0051891">
    <property type="term" value="P:positive regulation of cardioblast differentiation"/>
    <property type="evidence" value="ECO:0000250"/>
    <property type="project" value="UniProtKB"/>
</dbReference>
<dbReference type="GO" id="GO:2000767">
    <property type="term" value="P:positive regulation of cytoplasmic translation"/>
    <property type="evidence" value="ECO:0000250"/>
    <property type="project" value="UniProtKB"/>
</dbReference>
<dbReference type="GO" id="GO:0061003">
    <property type="term" value="P:positive regulation of dendritic spine morphogenesis"/>
    <property type="evidence" value="ECO:0000315"/>
    <property type="project" value="UniProtKB"/>
</dbReference>
<dbReference type="GO" id="GO:0010628">
    <property type="term" value="P:positive regulation of gene expression"/>
    <property type="evidence" value="ECO:0000315"/>
    <property type="project" value="UniProtKB"/>
</dbReference>
<dbReference type="GO" id="GO:1901534">
    <property type="term" value="P:positive regulation of hematopoietic progenitor cell differentiation"/>
    <property type="evidence" value="ECO:0000250"/>
    <property type="project" value="UniProtKB"/>
</dbReference>
<dbReference type="GO" id="GO:0032727">
    <property type="term" value="P:positive regulation of interferon-alpha production"/>
    <property type="evidence" value="ECO:0000266"/>
    <property type="project" value="RGD"/>
</dbReference>
<dbReference type="GO" id="GO:1904582">
    <property type="term" value="P:positive regulation of intracellular mRNA localization"/>
    <property type="evidence" value="ECO:0000315"/>
    <property type="project" value="UniProtKB"/>
</dbReference>
<dbReference type="GO" id="GO:0031442">
    <property type="term" value="P:positive regulation of mRNA 3'-end processing"/>
    <property type="evidence" value="ECO:0000250"/>
    <property type="project" value="UniProtKB"/>
</dbReference>
<dbReference type="GO" id="GO:0002735">
    <property type="term" value="P:positive regulation of myeloid dendritic cell cytokine production"/>
    <property type="evidence" value="ECO:0000266"/>
    <property type="project" value="RGD"/>
</dbReference>
<dbReference type="GO" id="GO:1900153">
    <property type="term" value="P:positive regulation of nuclear-transcribed mRNA catabolic process, deadenylation-dependent decay"/>
    <property type="evidence" value="ECO:0000266"/>
    <property type="project" value="RGD"/>
</dbReference>
<dbReference type="GO" id="GO:0032206">
    <property type="term" value="P:positive regulation of telomere maintenance"/>
    <property type="evidence" value="ECO:0000266"/>
    <property type="project" value="RGD"/>
</dbReference>
<dbReference type="GO" id="GO:1904358">
    <property type="term" value="P:positive regulation of telomere maintenance via telomere lengthening"/>
    <property type="evidence" value="ECO:0000266"/>
    <property type="project" value="RGD"/>
</dbReference>
<dbReference type="GO" id="GO:0045944">
    <property type="term" value="P:positive regulation of transcription by RNA polymerase II"/>
    <property type="evidence" value="ECO:0000250"/>
    <property type="project" value="UniProtKB"/>
</dbReference>
<dbReference type="GO" id="GO:0060261">
    <property type="term" value="P:positive regulation of transcription initiation by RNA polymerase II"/>
    <property type="evidence" value="ECO:0000250"/>
    <property type="project" value="UniProtKB"/>
</dbReference>
<dbReference type="GO" id="GO:0045995">
    <property type="term" value="P:regulation of embryonic development"/>
    <property type="evidence" value="ECO:0000250"/>
    <property type="project" value="UniProtKB"/>
</dbReference>
<dbReference type="GO" id="GO:0043488">
    <property type="term" value="P:regulation of mRNA stability"/>
    <property type="evidence" value="ECO:0000250"/>
    <property type="project" value="UniProtKB"/>
</dbReference>
<dbReference type="GO" id="GO:0006359">
    <property type="term" value="P:regulation of transcription by RNA polymerase III"/>
    <property type="evidence" value="ECO:0000250"/>
    <property type="project" value="UniProtKB"/>
</dbReference>
<dbReference type="GO" id="GO:0043330">
    <property type="term" value="P:response to exogenous dsRNA"/>
    <property type="evidence" value="ECO:0000266"/>
    <property type="project" value="RGD"/>
</dbReference>
<dbReference type="GO" id="GO:0009615">
    <property type="term" value="P:response to virus"/>
    <property type="evidence" value="ECO:0000266"/>
    <property type="project" value="RGD"/>
</dbReference>
<dbReference type="GO" id="GO:0007283">
    <property type="term" value="P:spermatogenesis"/>
    <property type="evidence" value="ECO:0000250"/>
    <property type="project" value="UniProtKB"/>
</dbReference>
<dbReference type="GO" id="GO:0090669">
    <property type="term" value="P:telomerase RNA stabilization"/>
    <property type="evidence" value="ECO:0000266"/>
    <property type="project" value="RGD"/>
</dbReference>
<dbReference type="CDD" id="cd17981">
    <property type="entry name" value="DEXHc_DHX36"/>
    <property type="match status" value="1"/>
</dbReference>
<dbReference type="CDD" id="cd18791">
    <property type="entry name" value="SF2_C_RHA"/>
    <property type="match status" value="1"/>
</dbReference>
<dbReference type="FunFam" id="1.20.120.1080:FF:000002">
    <property type="entry name" value="Putative ATP-dependent RNA helicase DHX36"/>
    <property type="match status" value="1"/>
</dbReference>
<dbReference type="FunFam" id="3.40.50.300:FF:000670">
    <property type="entry name" value="Putative ATP-dependent RNA helicase DHX36"/>
    <property type="match status" value="1"/>
</dbReference>
<dbReference type="FunFam" id="3.40.50.300:FF:000739">
    <property type="entry name" value="Putative ATP-dependent RNA helicase DHX36"/>
    <property type="match status" value="1"/>
</dbReference>
<dbReference type="Gene3D" id="1.20.120.1080">
    <property type="match status" value="1"/>
</dbReference>
<dbReference type="Gene3D" id="3.40.50.300">
    <property type="entry name" value="P-loop containing nucleotide triphosphate hydrolases"/>
    <property type="match status" value="2"/>
</dbReference>
<dbReference type="InterPro" id="IPR011709">
    <property type="entry name" value="DEAD-box_helicase_OB_fold"/>
</dbReference>
<dbReference type="InterPro" id="IPR011545">
    <property type="entry name" value="DEAD/DEAH_box_helicase_dom"/>
</dbReference>
<dbReference type="InterPro" id="IPR002464">
    <property type="entry name" value="DNA/RNA_helicase_DEAH_CS"/>
</dbReference>
<dbReference type="InterPro" id="IPR048333">
    <property type="entry name" value="HA2_WH"/>
</dbReference>
<dbReference type="InterPro" id="IPR007502">
    <property type="entry name" value="Helicase-assoc_dom"/>
</dbReference>
<dbReference type="InterPro" id="IPR014001">
    <property type="entry name" value="Helicase_ATP-bd"/>
</dbReference>
<dbReference type="InterPro" id="IPR001650">
    <property type="entry name" value="Helicase_C-like"/>
</dbReference>
<dbReference type="InterPro" id="IPR027417">
    <property type="entry name" value="P-loop_NTPase"/>
</dbReference>
<dbReference type="PANTHER" id="PTHR18934:SF237">
    <property type="entry name" value="ATP-DEPENDENT DNA_RNA HELICASE DHX36"/>
    <property type="match status" value="1"/>
</dbReference>
<dbReference type="PANTHER" id="PTHR18934">
    <property type="entry name" value="ATP-DEPENDENT RNA HELICASE"/>
    <property type="match status" value="1"/>
</dbReference>
<dbReference type="Pfam" id="PF00270">
    <property type="entry name" value="DEAD"/>
    <property type="match status" value="1"/>
</dbReference>
<dbReference type="Pfam" id="PF21010">
    <property type="entry name" value="HA2_C"/>
    <property type="match status" value="1"/>
</dbReference>
<dbReference type="Pfam" id="PF04408">
    <property type="entry name" value="HA2_N"/>
    <property type="match status" value="1"/>
</dbReference>
<dbReference type="Pfam" id="PF00271">
    <property type="entry name" value="Helicase_C"/>
    <property type="match status" value="1"/>
</dbReference>
<dbReference type="Pfam" id="PF07717">
    <property type="entry name" value="OB_NTP_bind"/>
    <property type="match status" value="1"/>
</dbReference>
<dbReference type="SMART" id="SM00487">
    <property type="entry name" value="DEXDc"/>
    <property type="match status" value="1"/>
</dbReference>
<dbReference type="SMART" id="SM00847">
    <property type="entry name" value="HA2"/>
    <property type="match status" value="1"/>
</dbReference>
<dbReference type="SMART" id="SM00490">
    <property type="entry name" value="HELICc"/>
    <property type="match status" value="1"/>
</dbReference>
<dbReference type="SUPFAM" id="SSF52540">
    <property type="entry name" value="P-loop containing nucleoside triphosphate hydrolases"/>
    <property type="match status" value="1"/>
</dbReference>
<dbReference type="PROSITE" id="PS00690">
    <property type="entry name" value="DEAH_ATP_HELICASE"/>
    <property type="match status" value="1"/>
</dbReference>
<dbReference type="PROSITE" id="PS51192">
    <property type="entry name" value="HELICASE_ATP_BIND_1"/>
    <property type="match status" value="1"/>
</dbReference>
<dbReference type="PROSITE" id="PS51194">
    <property type="entry name" value="HELICASE_CTER"/>
    <property type="match status" value="1"/>
</dbReference>
<accession>D4A2Z8</accession>
<protein>
    <recommendedName>
        <fullName evidence="8">ATP-dependent DNA/RNA helicase DHX36</fullName>
        <ecNumber evidence="3">3.6.4.12</ecNumber>
        <ecNumber evidence="3">3.6.4.13</ecNumber>
    </recommendedName>
    <alternativeName>
        <fullName evidence="3">DEAD/H box polypeptide 36</fullName>
    </alternativeName>
    <alternativeName>
        <fullName evidence="3">DEAH-box protein 36</fullName>
    </alternativeName>
    <alternativeName>
        <fullName evidence="3">G4-resolvase-1</fullName>
        <shortName evidence="3">G4R1</shortName>
    </alternativeName>
    <alternativeName>
        <fullName evidence="3">MLE-like protein 1</fullName>
    </alternativeName>
    <alternativeName>
        <fullName evidence="3">RNA helicase associated with AU-rich element protein</fullName>
    </alternativeName>
</protein>
<organism>
    <name type="scientific">Rattus norvegicus</name>
    <name type="common">Rat</name>
    <dbReference type="NCBI Taxonomy" id="10116"/>
    <lineage>
        <taxon>Eukaryota</taxon>
        <taxon>Metazoa</taxon>
        <taxon>Chordata</taxon>
        <taxon>Craniata</taxon>
        <taxon>Vertebrata</taxon>
        <taxon>Euteleostomi</taxon>
        <taxon>Mammalia</taxon>
        <taxon>Eutheria</taxon>
        <taxon>Euarchontoglires</taxon>
        <taxon>Glires</taxon>
        <taxon>Rodentia</taxon>
        <taxon>Myomorpha</taxon>
        <taxon>Muroidea</taxon>
        <taxon>Muridae</taxon>
        <taxon>Murinae</taxon>
        <taxon>Rattus</taxon>
    </lineage>
</organism>
<keyword id="KW-0007">Acetylation</keyword>
<keyword id="KW-0010">Activator</keyword>
<keyword id="KW-0051">Antiviral defense</keyword>
<keyword id="KW-0067">ATP-binding</keyword>
<keyword id="KW-0966">Cell projection</keyword>
<keyword id="KW-0158">Chromosome</keyword>
<keyword id="KW-0963">Cytoplasm</keyword>
<keyword id="KW-0217">Developmental protein</keyword>
<keyword id="KW-0221">Differentiation</keyword>
<keyword id="KW-0238">DNA-binding</keyword>
<keyword id="KW-0347">Helicase</keyword>
<keyword id="KW-0378">Hydrolase</keyword>
<keyword id="KW-0391">Immunity</keyword>
<keyword id="KW-0399">Innate immunity</keyword>
<keyword id="KW-0460">Magnesium</keyword>
<keyword id="KW-0479">Metal-binding</keyword>
<keyword id="KW-0496">Mitochondrion</keyword>
<keyword id="KW-0547">Nucleotide-binding</keyword>
<keyword id="KW-0539">Nucleus</keyword>
<keyword id="KW-0597">Phosphoprotein</keyword>
<keyword id="KW-1185">Reference proteome</keyword>
<keyword id="KW-0677">Repeat</keyword>
<keyword id="KW-0678">Repressor</keyword>
<keyword id="KW-0694">RNA-binding</keyword>
<keyword id="KW-0779">Telomere</keyword>
<keyword id="KW-0804">Transcription</keyword>
<keyword id="KW-0805">Transcription regulation</keyword>
<keyword id="KW-0810">Translation regulation</keyword>
<keyword id="KW-0813">Transport</keyword>
<sequence length="1000" mass="113843">MSYDYHQSWSRDGGPRGSGQGSGGGGGGSRGSGGGGGGRGGRGRHPAHLKGREIGLWYAKKQTQKNKEAERQERAVVHMDERREEQIVQLLNSVQAKNDKDSEAQISWFAPEDHGYGTEVSSEKKINSEKKLDNQEKKLLNQEKKTYRITDKSYIDRDSEYLLQQNEPNLGLDQQLLEDLQKKKTDPRYIEMQRFRKKLPSYGMQKELVNLINNHQVTVISGETGCGKTTQVTQFILDNYIERGIGSACRIVCTQPRRISAISVAERVAAERAESCGNGNSTGYQIRLQSRLPRKQGSILYCTTGIILQWLQSDSRLSSVSHIVLDEIHERNLQSDVLMTVIKDLLHFRSDLKVILMSATLNAEKFSEYFGNCPMIHIPGFTFPVVEYLLEDIIEKIRYFPEQKEHRSQFKRGFMQGHVNRQEKEEKEAIYKERWPAYIKELQTRYSASTIDVLEMMDDDKVDLNLIAALIRYIVLEEEDGAILVFLPGWDNISTLHDLLMSQVMFKSDRFLIIPLHSLMPTVNQTQVFKKTPPGVRKIVIATNIAETSITIDDVVYVIDGGKIKETHFDTQNNISTMSAEWVSKANAKQRKGRAGRVQPGHCYHLYNGLRASLLDDYQLPEILRTPLEELCLQIKILRLGGIAYFLSRLMDPPSDEAVVLSIKHLMELSALDKQEELTPLGVHLARLPVEPHIGKMILFGALFCCLDPVLTIAASLSFKDPFVIPLGKEKIADARRKELAKETRSDHLTVVNAFEGWEEAKRRGFRYEKDYCWEYFLSSNTLQMLHNMKGQFAEHLLGAGFVSSRSPKDPKANINSDNEKIIKAVICAGLYPKVAKIRLNLGKKRKMVKVHTKSDGLVSIHPKSVNVEQTDFHYNWLIYHLKMRTSSIYLYDCTEVSPYCLLFFGGDISIQKDKDQEIIAVDEWIVFQSPERIAHLVKGLRKELDILLQEKIECPHPVDWNDTKSRDCAVLSAILDLIKTQEKAIPRNLPPRSQDGYYS</sequence>
<evidence type="ECO:0000250" key="1">
    <source>
        <dbReference type="UniProtKB" id="Q05B79"/>
    </source>
</evidence>
<evidence type="ECO:0000250" key="2">
    <source>
        <dbReference type="UniProtKB" id="Q8VHK9"/>
    </source>
</evidence>
<evidence type="ECO:0000250" key="3">
    <source>
        <dbReference type="UniProtKB" id="Q9H2U1"/>
    </source>
</evidence>
<evidence type="ECO:0000255" key="4">
    <source>
        <dbReference type="PROSITE-ProRule" id="PRU00541"/>
    </source>
</evidence>
<evidence type="ECO:0000255" key="5">
    <source>
        <dbReference type="PROSITE-ProRule" id="PRU00542"/>
    </source>
</evidence>
<evidence type="ECO:0000256" key="6">
    <source>
        <dbReference type="SAM" id="MobiDB-lite"/>
    </source>
</evidence>
<evidence type="ECO:0000269" key="7">
    <source>
    </source>
</evidence>
<evidence type="ECO:0000305" key="8"/>
<evidence type="ECO:0000312" key="9">
    <source>
        <dbReference type="RGD" id="1308767"/>
    </source>
</evidence>
<comment type="function">
    <text evidence="1 2 3 7">Multifunctional ATP-dependent helicase that unwinds G-quadruplex (G4) structures (By similarity). Plays a role in many biological processes such as genomic integrity, gene expression regulations and as a sensor to initiate antiviral responses (PubMed:23651854). G4 structures correspond to helical structures containing guanine tetrads (By similarity). Binds with high affinity to and unwinds G4 structures that are formed in nucleic acids (G4-DNA and G4-RNA) (By similarity). Plays a role in genomic integrity. Converts the G4-RNA structure present in telomerase RNA template component (TREC) into a double-stranded RNA to promote P1 helix formation that acts as a template boundary ensuring accurate reverse transcription (By similarity). Plays a role in transcriptional regulation. Resolves G4-DNA structures in promoters of genes, such as YY1, KIT/c-kit and ALPL and positively regulates their expression (By similarity). Plays a role in post-transcriptional regulation. Unwinds a G4-RNA structure located in the 3'-UTR polyadenylation site of the pre-mRNA TP53 and stimulates TP53 pre-mRNA 3'-end processing in response to ultraviolet (UV)-induced DNA damage (By similarity). Binds to the precursor-microRNA-134 (pre-miR-134) terminal loop and regulates its transport into the synapto-dendritic compartment (PubMed:23651854). Involved in the pre-miR-134-dependent inhibition of target gene expression and the control of dendritic spine size (PubMed:23651854). Plays a role in the regulation of cytoplasmic mRNA translation and mRNA stability. Binds to both G4-RNA structures and alternative non-quadruplex-forming sequence within the 3'-UTR of the PITX1 mRNA regulating negatively PITX1 protein expression. Binds to both G4-RNA structure in the 5'-UTR and AU-rich elements (AREs) localized in the 3'-UTR of NKX2-5 mRNA to either stimulate protein translation or induce mRNA decay in an ELAVL1-dependent manner, respectively. Also binds to ARE sequences present in several mRNAs mediating exosome-mediated 3'-5' mRNA degradation. Involved in cytoplasmic urokinase-type plasminogen activator (uPA) mRNA decay (By similarity). Component of a multi-helicase-TICAM1 complex that acts as a cytoplasmic sensor of viral double-stranded RNA (dsRNA) and plays a role in the activation of a cascade of antiviral responses including the induction of pro-inflammatory cytokines via the adapter molecule TICAM1. Required for the early embryonic development and hematopoiesis. Involved in the regulation of cardioblast differentiation and proliferation during heart development. Involved in spermatogonia differentiation. May play a role in ossification (By similarity).</text>
</comment>
<comment type="catalytic activity">
    <reaction evidence="3">
        <text>ATP + H2O = ADP + phosphate + H(+)</text>
        <dbReference type="Rhea" id="RHEA:13065"/>
        <dbReference type="ChEBI" id="CHEBI:15377"/>
        <dbReference type="ChEBI" id="CHEBI:15378"/>
        <dbReference type="ChEBI" id="CHEBI:30616"/>
        <dbReference type="ChEBI" id="CHEBI:43474"/>
        <dbReference type="ChEBI" id="CHEBI:456216"/>
        <dbReference type="EC" id="3.6.4.12"/>
    </reaction>
</comment>
<comment type="catalytic activity">
    <reaction evidence="3">
        <text>ATP + H2O = ADP + phosphate + H(+)</text>
        <dbReference type="Rhea" id="RHEA:13065"/>
        <dbReference type="ChEBI" id="CHEBI:15377"/>
        <dbReference type="ChEBI" id="CHEBI:15378"/>
        <dbReference type="ChEBI" id="CHEBI:30616"/>
        <dbReference type="ChEBI" id="CHEBI:43474"/>
        <dbReference type="ChEBI" id="CHEBI:456216"/>
        <dbReference type="EC" id="3.6.4.13"/>
    </reaction>
</comment>
<comment type="cofactor">
    <cofactor evidence="1">
        <name>Mg(2+)</name>
        <dbReference type="ChEBI" id="CHEBI:18420"/>
    </cofactor>
</comment>
<comment type="activity regulation">
    <text evidence="3">ATPase activity is enhanced in the presence of homomeric poly(U) RNAs, but not by double-stranded DNA (dsDNA), double-stranded RNA (dsRNA) and tRNA.</text>
</comment>
<comment type="subunit">
    <text evidence="2 3">Found in a multi-helicase-TICAM1 complex at least composed of DHX36, DDX1, DDX21 and TICAM1; this complex exists in resting cells with or without dsRNA poly(I:C) ligand stimulation. Interacts (via C-terminus) with TICAM1 (via TIR domain). Interacts (via C-terminus) with DDX21; this interaction serves as bridges to TICAM1 (By similarity). Interacts with TERT; this interaction is dependent on the ability of DHX36 to bind to the G-quadruplex RNA (G4-RNA) structure present in the telomerase RNA template component (TERC). Interacts with DKC1; this interaction is dependent on the ability of DHX36 to bind to the G4-RNA structure present in TERC. Interacts with PARN; this interaction stimulates PARN to enhance uPA mRNA decay. Interacts with EXOSC3; this interaction occurs in a RNase-insensitive manner. Interacts with EXOSC10; this interaction occurs in a RNase-insensitive manner. Interacts with ILF3; this interaction occurs in a RNA-dependent manner. Interacts with ELAVL1; this interaction occurs in an RNA-dependent manner. Interacts with DDX5; this interaction occurs in a RNA-dependent manner. Interacts with DDX17; this interaction occurs in a RNA-dependent manner. Interacts with HDAC1; this interaction occurs in a RNA-dependent manner (By similarity). Interacts with HDAC3; this interaction occurs in a RNA-dependent manner (By similarity). Interacts with HDAC4 (By similarity). Interacts with AGO1. Interacts with AGO2 (By similarity). Interacts with ERCC6 (By similarity).</text>
</comment>
<comment type="subcellular location">
    <subcellularLocation>
        <location evidence="3">Nucleus</location>
    </subcellularLocation>
    <subcellularLocation>
        <location evidence="3">Cytoplasm</location>
    </subcellularLocation>
    <subcellularLocation>
        <location evidence="2">Cytoplasm</location>
        <location evidence="2">Cytosol</location>
    </subcellularLocation>
    <subcellularLocation>
        <location evidence="3">Cytoplasm</location>
        <location evidence="3">Stress granule</location>
    </subcellularLocation>
    <subcellularLocation>
        <location evidence="3">Nucleus speckle</location>
    </subcellularLocation>
    <subcellularLocation>
        <location evidence="3">Chromosome</location>
        <location evidence="3">Telomere</location>
    </subcellularLocation>
    <subcellularLocation>
        <location evidence="2">Mitochondrion</location>
    </subcellularLocation>
    <subcellularLocation>
        <location evidence="7">Perikaryon</location>
    </subcellularLocation>
    <subcellularLocation>
        <location evidence="7">Cell projection</location>
        <location evidence="7">Dendrite</location>
    </subcellularLocation>
    <subcellularLocation>
        <location evidence="7">Cell projection</location>
        <location evidence="7">Axon</location>
    </subcellularLocation>
    <text evidence="2 3">Predominantly localized in the nucleus. Colocalizes with SRSF2 in nuclear speckles. Colocalizes with DDX5 in nucleolar caps upon transcription inhibition. Accumulates and colocalized with TIA1 in cytoplasmic stress granules (SGs) in an arsenite-, heat shock- and RNA-binding-dependent manner. Shuttles into and out of SGs in an ATPase-dependent manner (By similarity). Colocalizes in the cytosol with the multi-helicase-TICAM1 complex that translocates to the mitochondria upon poly(I:C) stimulation (By similarity).</text>
</comment>
<comment type="domain">
    <text evidence="1 3">The DHX36-specific motif (DSM) form folds into a DNA-binding-induced alpha-helix that together with the oligonucleotide and oligosaccharide-binding-fold-like (OB-fold-like) subdomain bind to Myc-promoter G4-DNA-containing structure in an ATP-dependent manner. Upon G4-DNA-binding, DHX36 pulls on DSM in the 3'-direction, inducing rearrangement of the RecA-like 1 and 2 and the degenerate-winged-helix (WH) regions; these rearrangements are probably responsible for the ATP-independent repetitive G4-DNA unfolding activity, one residue at a time. Upon resolving of G4-DNA into separate nucleotide strands, and ATP hydrolysis, the apoprotein of DHX36 seems incompatible with G4-DNA-binding (By similarity). The N-terminus is necessary for its recruitment to cytoplasmic stress granules (SGs) upon arsenite-induced treatment (By similarity).</text>
</comment>
<gene>
    <name evidence="9" type="primary">Dhx36</name>
</gene>
<name>DHX36_RAT</name>
<proteinExistence type="evidence at protein level"/>
<feature type="chain" id="PRO_0000445445" description="ATP-dependent DNA/RNA helicase DHX36">
    <location>
        <begin position="1"/>
        <end position="1000"/>
    </location>
</feature>
<feature type="domain" description="Helicase ATP-binding" evidence="4">
    <location>
        <begin position="209"/>
        <end position="379"/>
    </location>
</feature>
<feature type="domain" description="Helicase C-terminal" evidence="5">
    <location>
        <begin position="469"/>
        <end position="639"/>
    </location>
</feature>
<feature type="region of interest" description="Necessary for nuclear and nucleolar caps localizations" evidence="3">
    <location>
        <begin position="1"/>
        <end position="192"/>
    </location>
</feature>
<feature type="region of interest" description="Required for the pre-miR-134 transport" evidence="7">
    <location>
        <begin position="1"/>
        <end position="96"/>
    </location>
</feature>
<feature type="region of interest" description="Disordered" evidence="6">
    <location>
        <begin position="1"/>
        <end position="53"/>
    </location>
</feature>
<feature type="region of interest" description="Required for recruitment to cytoplasmic stress granules" evidence="3">
    <location>
        <begin position="1"/>
        <end position="43"/>
    </location>
</feature>
<feature type="region of interest" description="Required for G4-DNA- and G4-RNA-binding" evidence="3">
    <location>
        <begin position="45"/>
        <end position="97"/>
    </location>
</feature>
<feature type="region of interest" description="DSM (DHX36-specific motif)" evidence="1 3">
    <location>
        <begin position="45"/>
        <end position="67"/>
    </location>
</feature>
<feature type="region of interest" description="RecA-like domain 1" evidence="1">
    <location>
        <begin position="98"/>
        <end position="378"/>
    </location>
</feature>
<feature type="region of interest" description="Necessary for interaction with single-stranded DNA at the 3'-end of the G4-DNA structure" evidence="1">
    <location>
        <begin position="257"/>
        <end position="309"/>
    </location>
</feature>
<feature type="region of interest" description="RecA-like domain 2" evidence="1">
    <location>
        <begin position="379"/>
        <end position="620"/>
    </location>
</feature>
<feature type="region of interest" description="Necessary for interaction with single-stranded DNA at the 3'-end of the G4-DNA structure" evidence="1">
    <location>
        <begin position="490"/>
        <end position="549"/>
    </location>
</feature>
<feature type="region of interest" description="WH domain" evidence="1">
    <location>
        <begin position="621"/>
        <end position="690"/>
    </location>
</feature>
<feature type="region of interest" description="Necessary for interaction with single-stranded DNA at the 3'-end of the G4-DNA structure" evidence="1">
    <location>
        <begin position="630"/>
        <end position="689"/>
    </location>
</feature>
<feature type="region of interest" description="OB-fold-like subdomains" evidence="1">
    <location>
        <begin position="833"/>
        <end position="897"/>
    </location>
</feature>
<feature type="region of interest" description="Necessary for interaction with single-stranded DNA at the 3'-end of the G4-DNA structure" evidence="1">
    <location>
        <begin position="841"/>
        <end position="852"/>
    </location>
</feature>
<feature type="region of interest" description="Necessary for interaction with single-stranded DNA at the 3'-end of the G4-DNA structure" evidence="1">
    <location>
        <begin position="862"/>
        <end position="892"/>
    </location>
</feature>
<feature type="short sequence motif" description="DEAH box" evidence="4">
    <location>
        <begin position="326"/>
        <end position="329"/>
    </location>
</feature>
<feature type="short sequence motif" description="Nuclear localization signal" evidence="3">
    <location>
        <begin position="509"/>
        <end position="520"/>
    </location>
</feature>
<feature type="compositionally biased region" description="Gly residues" evidence="6">
    <location>
        <begin position="15"/>
        <end position="40"/>
    </location>
</feature>
<feature type="binding site" evidence="1">
    <location>
        <begin position="225"/>
        <end position="230"/>
    </location>
    <ligand>
        <name>ATP</name>
        <dbReference type="ChEBI" id="CHEBI:30616"/>
    </ligand>
</feature>
<feature type="binding site" evidence="1">
    <location>
        <position position="327"/>
    </location>
    <ligand>
        <name>Mg(2+)</name>
        <dbReference type="ChEBI" id="CHEBI:18420"/>
    </ligand>
</feature>
<feature type="binding site" evidence="1">
    <location>
        <position position="329"/>
    </location>
    <ligand>
        <name>Mg(2+)</name>
        <dbReference type="ChEBI" id="CHEBI:18420"/>
    </ligand>
</feature>
<feature type="binding site" evidence="1">
    <location>
        <position position="549"/>
    </location>
    <ligand>
        <name>ATP</name>
        <dbReference type="ChEBI" id="CHEBI:30616"/>
    </ligand>
</feature>
<feature type="binding site" evidence="1">
    <location>
        <begin position="594"/>
        <end position="597"/>
    </location>
    <ligand>
        <name>ATP</name>
        <dbReference type="ChEBI" id="CHEBI:30616"/>
    </ligand>
</feature>
<feature type="modified residue" description="Phosphoserine" evidence="3">
    <location>
        <position position="153"/>
    </location>
</feature>
<feature type="modified residue" description="N6-acetyllysine" evidence="3">
    <location>
        <position position="939"/>
    </location>
</feature>